<gene>
    <name evidence="1" type="primary">gloB</name>
    <name type="ordered locus">ECIAI39_0437</name>
</gene>
<organism>
    <name type="scientific">Escherichia coli O7:K1 (strain IAI39 / ExPEC)</name>
    <dbReference type="NCBI Taxonomy" id="585057"/>
    <lineage>
        <taxon>Bacteria</taxon>
        <taxon>Pseudomonadati</taxon>
        <taxon>Pseudomonadota</taxon>
        <taxon>Gammaproteobacteria</taxon>
        <taxon>Enterobacterales</taxon>
        <taxon>Enterobacteriaceae</taxon>
        <taxon>Escherichia</taxon>
    </lineage>
</organism>
<comment type="function">
    <text evidence="1">Thiolesterase that catalyzes the hydrolysis of S-D-lactoyl-glutathione to form glutathione and D-lactic acid.</text>
</comment>
<comment type="catalytic activity">
    <reaction evidence="1">
        <text>an S-(2-hydroxyacyl)glutathione + H2O = a 2-hydroxy carboxylate + glutathione + H(+)</text>
        <dbReference type="Rhea" id="RHEA:21864"/>
        <dbReference type="ChEBI" id="CHEBI:15377"/>
        <dbReference type="ChEBI" id="CHEBI:15378"/>
        <dbReference type="ChEBI" id="CHEBI:57925"/>
        <dbReference type="ChEBI" id="CHEBI:58896"/>
        <dbReference type="ChEBI" id="CHEBI:71261"/>
        <dbReference type="EC" id="3.1.2.6"/>
    </reaction>
</comment>
<comment type="cofactor">
    <cofactor evidence="1">
        <name>Zn(2+)</name>
        <dbReference type="ChEBI" id="CHEBI:29105"/>
    </cofactor>
    <text evidence="1">Binds 2 Zn(2+) ions per subunit.</text>
</comment>
<comment type="pathway">
    <text evidence="1">Secondary metabolite metabolism; methylglyoxal degradation; (R)-lactate from methylglyoxal: step 2/2.</text>
</comment>
<comment type="subunit">
    <text evidence="1">Monomer.</text>
</comment>
<comment type="similarity">
    <text evidence="1">Belongs to the metallo-beta-lactamase superfamily. Glyoxalase II family.</text>
</comment>
<accession>B7NKW6</accession>
<feature type="chain" id="PRO_1000144760" description="Hydroxyacylglutathione hydrolase">
    <location>
        <begin position="1"/>
        <end position="251"/>
    </location>
</feature>
<feature type="binding site" evidence="1">
    <location>
        <position position="53"/>
    </location>
    <ligand>
        <name>Zn(2+)</name>
        <dbReference type="ChEBI" id="CHEBI:29105"/>
        <label>1</label>
    </ligand>
</feature>
<feature type="binding site" evidence="1">
    <location>
        <position position="55"/>
    </location>
    <ligand>
        <name>Zn(2+)</name>
        <dbReference type="ChEBI" id="CHEBI:29105"/>
        <label>1</label>
    </ligand>
</feature>
<feature type="binding site" evidence="1">
    <location>
        <position position="57"/>
    </location>
    <ligand>
        <name>Zn(2+)</name>
        <dbReference type="ChEBI" id="CHEBI:29105"/>
        <label>2</label>
    </ligand>
</feature>
<feature type="binding site" evidence="1">
    <location>
        <position position="58"/>
    </location>
    <ligand>
        <name>Zn(2+)</name>
        <dbReference type="ChEBI" id="CHEBI:29105"/>
        <label>2</label>
    </ligand>
</feature>
<feature type="binding site" evidence="1">
    <location>
        <position position="110"/>
    </location>
    <ligand>
        <name>Zn(2+)</name>
        <dbReference type="ChEBI" id="CHEBI:29105"/>
        <label>1</label>
    </ligand>
</feature>
<feature type="binding site" evidence="1">
    <location>
        <position position="127"/>
    </location>
    <ligand>
        <name>Zn(2+)</name>
        <dbReference type="ChEBI" id="CHEBI:29105"/>
        <label>1</label>
    </ligand>
</feature>
<feature type="binding site" evidence="1">
    <location>
        <position position="127"/>
    </location>
    <ligand>
        <name>Zn(2+)</name>
        <dbReference type="ChEBI" id="CHEBI:29105"/>
        <label>2</label>
    </ligand>
</feature>
<feature type="binding site" evidence="1">
    <location>
        <position position="165"/>
    </location>
    <ligand>
        <name>Zn(2+)</name>
        <dbReference type="ChEBI" id="CHEBI:29105"/>
        <label>2</label>
    </ligand>
</feature>
<name>GLO2_ECO7I</name>
<dbReference type="EC" id="3.1.2.6" evidence="1"/>
<dbReference type="EMBL" id="CU928164">
    <property type="protein sequence ID" value="CAR16575.1"/>
    <property type="molecule type" value="Genomic_DNA"/>
</dbReference>
<dbReference type="RefSeq" id="WP_001052730.1">
    <property type="nucleotide sequence ID" value="NC_011750.1"/>
</dbReference>
<dbReference type="RefSeq" id="YP_002406470.1">
    <property type="nucleotide sequence ID" value="NC_011750.1"/>
</dbReference>
<dbReference type="SMR" id="B7NKW6"/>
<dbReference type="STRING" id="585057.ECIAI39_0437"/>
<dbReference type="KEGG" id="ect:ECIAI39_0437"/>
<dbReference type="PATRIC" id="fig|585057.6.peg.466"/>
<dbReference type="HOGENOM" id="CLU_030571_4_1_6"/>
<dbReference type="UniPathway" id="UPA00619">
    <property type="reaction ID" value="UER00676"/>
</dbReference>
<dbReference type="Proteomes" id="UP000000749">
    <property type="component" value="Chromosome"/>
</dbReference>
<dbReference type="GO" id="GO:0004416">
    <property type="term" value="F:hydroxyacylglutathione hydrolase activity"/>
    <property type="evidence" value="ECO:0007669"/>
    <property type="project" value="UniProtKB-UniRule"/>
</dbReference>
<dbReference type="GO" id="GO:0046872">
    <property type="term" value="F:metal ion binding"/>
    <property type="evidence" value="ECO:0007669"/>
    <property type="project" value="UniProtKB-KW"/>
</dbReference>
<dbReference type="GO" id="GO:0019243">
    <property type="term" value="P:methylglyoxal catabolic process to D-lactate via S-lactoyl-glutathione"/>
    <property type="evidence" value="ECO:0007669"/>
    <property type="project" value="InterPro"/>
</dbReference>
<dbReference type="CDD" id="cd07723">
    <property type="entry name" value="hydroxyacylglutathione_hydrolase_MBL-fold"/>
    <property type="match status" value="1"/>
</dbReference>
<dbReference type="FunFam" id="3.60.15.10:FF:000012">
    <property type="entry name" value="Hydroxyacylglutathione hydrolase"/>
    <property type="match status" value="1"/>
</dbReference>
<dbReference type="Gene3D" id="3.60.15.10">
    <property type="entry name" value="Ribonuclease Z/Hydroxyacylglutathione hydrolase-like"/>
    <property type="match status" value="1"/>
</dbReference>
<dbReference type="HAMAP" id="MF_01374">
    <property type="entry name" value="Glyoxalase_2"/>
    <property type="match status" value="1"/>
</dbReference>
<dbReference type="InterPro" id="IPR035680">
    <property type="entry name" value="Clx_II_MBL"/>
</dbReference>
<dbReference type="InterPro" id="IPR050110">
    <property type="entry name" value="Glyoxalase_II_hydrolase"/>
</dbReference>
<dbReference type="InterPro" id="IPR032282">
    <property type="entry name" value="HAGH_C"/>
</dbReference>
<dbReference type="InterPro" id="IPR017782">
    <property type="entry name" value="Hydroxyacylglutathione_Hdrlase"/>
</dbReference>
<dbReference type="InterPro" id="IPR001279">
    <property type="entry name" value="Metallo-B-lactamas"/>
</dbReference>
<dbReference type="InterPro" id="IPR036866">
    <property type="entry name" value="RibonucZ/Hydroxyglut_hydro"/>
</dbReference>
<dbReference type="NCBIfam" id="TIGR03413">
    <property type="entry name" value="GSH_gloB"/>
    <property type="match status" value="1"/>
</dbReference>
<dbReference type="NCBIfam" id="NF007597">
    <property type="entry name" value="PRK10241.1"/>
    <property type="match status" value="1"/>
</dbReference>
<dbReference type="PANTHER" id="PTHR43705">
    <property type="entry name" value="HYDROXYACYLGLUTATHIONE HYDROLASE"/>
    <property type="match status" value="1"/>
</dbReference>
<dbReference type="PANTHER" id="PTHR43705:SF1">
    <property type="entry name" value="HYDROXYACYLGLUTATHIONE HYDROLASE GLOB"/>
    <property type="match status" value="1"/>
</dbReference>
<dbReference type="Pfam" id="PF16123">
    <property type="entry name" value="HAGH_C"/>
    <property type="match status" value="1"/>
</dbReference>
<dbReference type="Pfam" id="PF00753">
    <property type="entry name" value="Lactamase_B"/>
    <property type="match status" value="1"/>
</dbReference>
<dbReference type="PIRSF" id="PIRSF005457">
    <property type="entry name" value="Glx"/>
    <property type="match status" value="1"/>
</dbReference>
<dbReference type="SMART" id="SM00849">
    <property type="entry name" value="Lactamase_B"/>
    <property type="match status" value="1"/>
</dbReference>
<dbReference type="SUPFAM" id="SSF56281">
    <property type="entry name" value="Metallo-hydrolase/oxidoreductase"/>
    <property type="match status" value="1"/>
</dbReference>
<evidence type="ECO:0000255" key="1">
    <source>
        <dbReference type="HAMAP-Rule" id="MF_01374"/>
    </source>
</evidence>
<protein>
    <recommendedName>
        <fullName evidence="1">Hydroxyacylglutathione hydrolase</fullName>
        <ecNumber evidence="1">3.1.2.6</ecNumber>
    </recommendedName>
    <alternativeName>
        <fullName evidence="1">Glyoxalase II</fullName>
        <shortName evidence="1">Glx II</shortName>
    </alternativeName>
</protein>
<reference key="1">
    <citation type="journal article" date="2009" name="PLoS Genet.">
        <title>Organised genome dynamics in the Escherichia coli species results in highly diverse adaptive paths.</title>
        <authorList>
            <person name="Touchon M."/>
            <person name="Hoede C."/>
            <person name="Tenaillon O."/>
            <person name="Barbe V."/>
            <person name="Baeriswyl S."/>
            <person name="Bidet P."/>
            <person name="Bingen E."/>
            <person name="Bonacorsi S."/>
            <person name="Bouchier C."/>
            <person name="Bouvet O."/>
            <person name="Calteau A."/>
            <person name="Chiapello H."/>
            <person name="Clermont O."/>
            <person name="Cruveiller S."/>
            <person name="Danchin A."/>
            <person name="Diard M."/>
            <person name="Dossat C."/>
            <person name="Karoui M.E."/>
            <person name="Frapy E."/>
            <person name="Garry L."/>
            <person name="Ghigo J.M."/>
            <person name="Gilles A.M."/>
            <person name="Johnson J."/>
            <person name="Le Bouguenec C."/>
            <person name="Lescat M."/>
            <person name="Mangenot S."/>
            <person name="Martinez-Jehanne V."/>
            <person name="Matic I."/>
            <person name="Nassif X."/>
            <person name="Oztas S."/>
            <person name="Petit M.A."/>
            <person name="Pichon C."/>
            <person name="Rouy Z."/>
            <person name="Ruf C.S."/>
            <person name="Schneider D."/>
            <person name="Tourret J."/>
            <person name="Vacherie B."/>
            <person name="Vallenet D."/>
            <person name="Medigue C."/>
            <person name="Rocha E.P.C."/>
            <person name="Denamur E."/>
        </authorList>
    </citation>
    <scope>NUCLEOTIDE SEQUENCE [LARGE SCALE GENOMIC DNA]</scope>
    <source>
        <strain>IAI39 / ExPEC</strain>
    </source>
</reference>
<keyword id="KW-0378">Hydrolase</keyword>
<keyword id="KW-0479">Metal-binding</keyword>
<keyword id="KW-0862">Zinc</keyword>
<sequence length="251" mass="28433">MNLNSIPAFDDNYIWVLNDEAGRCLIVDPGDAEPVLNAIAANNWQPEAIFLTHHHHDHVGGVKELVKKFPQIVVYGPQETQDKGTTQVVKDGETAFVLGHEFSVIATPGHTLGHICYFSKPYLFCGDTLFSGGCGRLFEGTASQMYQSLKKLSALPDDTLVCCAHEYTLSNMKFALSILPHDLSINDYYRKVKELRAKNQITLPVILKNERQINVFLRTEDIDLINVINEETLLQQPEERFAWLRSKKDRF</sequence>
<proteinExistence type="inferred from homology"/>